<feature type="signal peptide" evidence="5">
    <location>
        <begin position="1"/>
        <end position="27"/>
    </location>
</feature>
<feature type="chain" id="PRO_0000025404" description="Neuropeptide F" evidence="6">
    <location>
        <begin position="28"/>
        <end position="63"/>
    </location>
</feature>
<feature type="propeptide" id="PRO_0000025405">
    <location>
        <begin position="67"/>
        <end position="90"/>
    </location>
</feature>
<feature type="region of interest" description="Disordered" evidence="3">
    <location>
        <begin position="54"/>
        <end position="90"/>
    </location>
</feature>
<feature type="compositionally biased region" description="Basic residues" evidence="3">
    <location>
        <begin position="56"/>
        <end position="65"/>
    </location>
</feature>
<feature type="modified residue" description="Phenylalanine amide" evidence="4 5">
    <location>
        <position position="63"/>
    </location>
</feature>
<protein>
    <recommendedName>
        <fullName>Neuropeptide F</fullName>
        <shortName>AeaNPF</shortName>
        <shortName>NPF</shortName>
    </recommendedName>
</protein>
<gene>
    <name type="primary">npf</name>
    <name type="ORF">AAEL002733</name>
</gene>
<organism>
    <name type="scientific">Aedes aegypti</name>
    <name type="common">Yellowfever mosquito</name>
    <name type="synonym">Culex aegypti</name>
    <dbReference type="NCBI Taxonomy" id="7159"/>
    <lineage>
        <taxon>Eukaryota</taxon>
        <taxon>Metazoa</taxon>
        <taxon>Ecdysozoa</taxon>
        <taxon>Arthropoda</taxon>
        <taxon>Hexapoda</taxon>
        <taxon>Insecta</taxon>
        <taxon>Pterygota</taxon>
        <taxon>Neoptera</taxon>
        <taxon>Endopterygota</taxon>
        <taxon>Diptera</taxon>
        <taxon>Nematocera</taxon>
        <taxon>Culicoidea</taxon>
        <taxon>Culicidae</taxon>
        <taxon>Culicinae</taxon>
        <taxon>Aedini</taxon>
        <taxon>Aedes</taxon>
        <taxon>Stegomyia</taxon>
    </lineage>
</organism>
<proteinExistence type="evidence at protein level"/>
<name>NPF_AEDAE</name>
<keyword id="KW-0027">Amidation</keyword>
<keyword id="KW-0165">Cleavage on pair of basic residues</keyword>
<keyword id="KW-0222">Digestion</keyword>
<keyword id="KW-0903">Direct protein sequencing</keyword>
<keyword id="KW-0372">Hormone</keyword>
<keyword id="KW-0527">Neuropeptide</keyword>
<keyword id="KW-1185">Reference proteome</keyword>
<keyword id="KW-0964">Secreted</keyword>
<keyword id="KW-0732">Signal</keyword>
<comment type="function">
    <text evidence="1">An integral part of the sensory system that mediates food signaling, providing the neural basis for the regulation of food response; coordinates larval foraging and social behavior changes during development (By similarity). May have a hormonal role in females.</text>
</comment>
<comment type="subcellular location">
    <subcellularLocation>
        <location evidence="7">Secreted</location>
    </subcellularLocation>
</comment>
<comment type="tissue specificity">
    <text evidence="4">Expressed in hemolymph, brain and midgut.</text>
</comment>
<comment type="similarity">
    <text evidence="2">Belongs to the NPY family.</text>
</comment>
<comment type="sequence caution" evidence="7">
    <conflict type="erroneous gene model prediction">
        <sequence resource="EMBL-CDS" id="EAT46037"/>
    </conflict>
</comment>
<reference evidence="7 8" key="1">
    <citation type="journal article" date="2002" name="Peptides">
        <title>Neuropeptide F and its expression in the yellow fever mosquito, Aedes aegypti.</title>
        <authorList>
            <person name="Stanek D.M."/>
            <person name="Pohl J."/>
            <person name="Crim J.W."/>
            <person name="Brown M.R."/>
        </authorList>
    </citation>
    <scope>NUCLEOTIDE SEQUENCE [MRNA]</scope>
    <scope>PROTEIN SEQUENCE OF 33-62</scope>
    <scope>TISSUE SPECIFICITY</scope>
    <scope>AMIDATION AT PHE-63</scope>
    <source>
        <tissue evidence="4">Head</tissue>
        <tissue evidence="4">Midgut</tissue>
    </source>
</reference>
<reference key="2">
    <citation type="journal article" date="2007" name="Science">
        <title>Genome sequence of Aedes aegypti, a major arbovirus vector.</title>
        <authorList>
            <person name="Nene V."/>
            <person name="Wortman J.R."/>
            <person name="Lawson D."/>
            <person name="Haas B.J."/>
            <person name="Kodira C.D."/>
            <person name="Tu Z.J."/>
            <person name="Loftus B.J."/>
            <person name="Xi Z."/>
            <person name="Megy K."/>
            <person name="Grabherr M."/>
            <person name="Ren Q."/>
            <person name="Zdobnov E.M."/>
            <person name="Lobo N.F."/>
            <person name="Campbell K.S."/>
            <person name="Brown S.E."/>
            <person name="Bonaldo M.F."/>
            <person name="Zhu J."/>
            <person name="Sinkins S.P."/>
            <person name="Hogenkamp D.G."/>
            <person name="Amedeo P."/>
            <person name="Arensburger P."/>
            <person name="Atkinson P.W."/>
            <person name="Bidwell S.L."/>
            <person name="Biedler J."/>
            <person name="Birney E."/>
            <person name="Bruggner R.V."/>
            <person name="Costas J."/>
            <person name="Coy M.R."/>
            <person name="Crabtree J."/>
            <person name="Crawford M."/>
            <person name="DeBruyn B."/>
            <person name="DeCaprio D."/>
            <person name="Eiglmeier K."/>
            <person name="Eisenstadt E."/>
            <person name="El-Dorry H."/>
            <person name="Gelbart W.M."/>
            <person name="Gomes S.L."/>
            <person name="Hammond M."/>
            <person name="Hannick L.I."/>
            <person name="Hogan J.R."/>
            <person name="Holmes M.H."/>
            <person name="Jaffe D."/>
            <person name="Johnston S.J."/>
            <person name="Kennedy R.C."/>
            <person name="Koo H."/>
            <person name="Kravitz S."/>
            <person name="Kriventseva E.V."/>
            <person name="Kulp D."/>
            <person name="Labutti K."/>
            <person name="Lee E."/>
            <person name="Li S."/>
            <person name="Lovin D.D."/>
            <person name="Mao C."/>
            <person name="Mauceli E."/>
            <person name="Menck C.F."/>
            <person name="Miller J.R."/>
            <person name="Montgomery P."/>
            <person name="Mori A."/>
            <person name="Nascimento A.L."/>
            <person name="Naveira H.F."/>
            <person name="Nusbaum C."/>
            <person name="O'Leary S.B."/>
            <person name="Orvis J."/>
            <person name="Pertea M."/>
            <person name="Quesneville H."/>
            <person name="Reidenbach K.R."/>
            <person name="Rogers Y.-H.C."/>
            <person name="Roth C.W."/>
            <person name="Schneider J.R."/>
            <person name="Schatz M."/>
            <person name="Shumway M."/>
            <person name="Stanke M."/>
            <person name="Stinson E.O."/>
            <person name="Tubio J.M.C."/>
            <person name="Vanzee J.P."/>
            <person name="Verjovski-Almeida S."/>
            <person name="Werner D."/>
            <person name="White O.R."/>
            <person name="Wyder S."/>
            <person name="Zeng Q."/>
            <person name="Zhao Q."/>
            <person name="Zhao Y."/>
            <person name="Hill C.A."/>
            <person name="Raikhel A.S."/>
            <person name="Soares M.B."/>
            <person name="Knudson D.L."/>
            <person name="Lee N.H."/>
            <person name="Galagan J."/>
            <person name="Salzberg S.L."/>
            <person name="Paulsen I.T."/>
            <person name="Dimopoulos G."/>
            <person name="Collins F.H."/>
            <person name="Bruce B."/>
            <person name="Fraser-Liggett C.M."/>
            <person name="Severson D.W."/>
        </authorList>
    </citation>
    <scope>NUCLEOTIDE SEQUENCE [LARGE SCALE GENOMIC DNA]</scope>
    <source>
        <strain>LVPib12</strain>
    </source>
</reference>
<reference key="3">
    <citation type="journal article" date="2002" name="Science">
        <title>Neuropeptides and peptide hormones in Anopheles gambiae.</title>
        <authorList>
            <person name="Riehle M.A."/>
            <person name="Garczynski S.F."/>
            <person name="Crim J.W."/>
            <person name="Hill C.A."/>
            <person name="Brown M.R."/>
        </authorList>
    </citation>
    <scope>PROTEIN SEQUENCE OF 28-63</scope>
    <scope>AMIDATION AT PHE-63</scope>
</reference>
<evidence type="ECO:0000250" key="1"/>
<evidence type="ECO:0000255" key="2"/>
<evidence type="ECO:0000256" key="3">
    <source>
        <dbReference type="SAM" id="MobiDB-lite"/>
    </source>
</evidence>
<evidence type="ECO:0000269" key="4">
    <source>
    </source>
</evidence>
<evidence type="ECO:0000269" key="5">
    <source>
    </source>
</evidence>
<evidence type="ECO:0000303" key="6">
    <source>
    </source>
</evidence>
<evidence type="ECO:0000305" key="7"/>
<evidence type="ECO:0000312" key="8">
    <source>
        <dbReference type="EMBL" id="AAM74026.1"/>
    </source>
</evidence>
<dbReference type="EMBL" id="AF474405">
    <property type="protein sequence ID" value="AAM74026.1"/>
    <property type="molecule type" value="mRNA"/>
</dbReference>
<dbReference type="EMBL" id="CH477251">
    <property type="protein sequence ID" value="EAT46037.1"/>
    <property type="status" value="ALT_SEQ"/>
    <property type="molecule type" value="Genomic_DNA"/>
</dbReference>
<dbReference type="EMBL" id="CH477629">
    <property type="status" value="NOT_ANNOTATED_CDS"/>
    <property type="molecule type" value="Genomic_DNA"/>
</dbReference>
<dbReference type="RefSeq" id="XP_001655888.1">
    <property type="nucleotide sequence ID" value="XM_001655838.1"/>
</dbReference>
<dbReference type="SMR" id="Q8MP00"/>
<dbReference type="STRING" id="7159.Q8MP00"/>
<dbReference type="PaxDb" id="7159-AAEL002733-PA"/>
<dbReference type="EnsemblMetazoa" id="AAEL002733-RB">
    <property type="protein sequence ID" value="AAEL002733-PB"/>
    <property type="gene ID" value="AAEL002733"/>
</dbReference>
<dbReference type="VEuPathDB" id="VectorBase:AAEL002733"/>
<dbReference type="HOGENOM" id="CLU_2905969_0_0_1"/>
<dbReference type="InParanoid" id="Q8MP00"/>
<dbReference type="Proteomes" id="UP000008820">
    <property type="component" value="Chromosome 1"/>
</dbReference>
<dbReference type="Proteomes" id="UP000682892">
    <property type="component" value="Chromosome 1"/>
</dbReference>
<dbReference type="Proteomes" id="UP000682892">
    <property type="component" value="Unassembled WGS sequence"/>
</dbReference>
<dbReference type="GO" id="GO:0005576">
    <property type="term" value="C:extracellular region"/>
    <property type="evidence" value="ECO:0007669"/>
    <property type="project" value="UniProtKB-SubCell"/>
</dbReference>
<dbReference type="GO" id="GO:0005179">
    <property type="term" value="F:hormone activity"/>
    <property type="evidence" value="ECO:0007669"/>
    <property type="project" value="UniProtKB-KW"/>
</dbReference>
<dbReference type="GO" id="GO:0007586">
    <property type="term" value="P:digestion"/>
    <property type="evidence" value="ECO:0007669"/>
    <property type="project" value="UniProtKB-KW"/>
</dbReference>
<dbReference type="GO" id="GO:0007218">
    <property type="term" value="P:neuropeptide signaling pathway"/>
    <property type="evidence" value="ECO:0007669"/>
    <property type="project" value="UniProtKB-KW"/>
</dbReference>
<accession>Q8MP00</accession>
<accession>Q17HA5</accession>
<sequence>MTFSTSSSFSRRALVALLVCTLLIDLSSFTDARPQDDPTSVAEAIRLLQELETKHAQHARPRFGKRSYLNPAGYGQDEQEDDWQDSTFTR</sequence>